<organism>
    <name type="scientific">Ignicoccus hospitalis (strain KIN4/I / DSM 18386 / JCM 14125)</name>
    <dbReference type="NCBI Taxonomy" id="453591"/>
    <lineage>
        <taxon>Archaea</taxon>
        <taxon>Thermoproteota</taxon>
        <taxon>Thermoprotei</taxon>
        <taxon>Desulfurococcales</taxon>
        <taxon>Desulfurococcaceae</taxon>
        <taxon>Ignicoccus</taxon>
    </lineage>
</organism>
<name>SYS_IGNH4</name>
<evidence type="ECO:0000255" key="1">
    <source>
        <dbReference type="HAMAP-Rule" id="MF_00176"/>
    </source>
</evidence>
<reference key="1">
    <citation type="journal article" date="2008" name="Genome Biol.">
        <title>A genomic analysis of the archaeal system Ignicoccus hospitalis-Nanoarchaeum equitans.</title>
        <authorList>
            <person name="Podar M."/>
            <person name="Anderson I."/>
            <person name="Makarova K.S."/>
            <person name="Elkins J.G."/>
            <person name="Ivanova N."/>
            <person name="Wall M.A."/>
            <person name="Lykidis A."/>
            <person name="Mavromatis K."/>
            <person name="Sun H."/>
            <person name="Hudson M.E."/>
            <person name="Chen W."/>
            <person name="Deciu C."/>
            <person name="Hutchison D."/>
            <person name="Eads J.R."/>
            <person name="Anderson A."/>
            <person name="Fernandes F."/>
            <person name="Szeto E."/>
            <person name="Lapidus A."/>
            <person name="Kyrpides N.C."/>
            <person name="Saier M.H. Jr."/>
            <person name="Richardson P.M."/>
            <person name="Rachel R."/>
            <person name="Huber H."/>
            <person name="Eisen J.A."/>
            <person name="Koonin E.V."/>
            <person name="Keller M."/>
            <person name="Stetter K.O."/>
        </authorList>
    </citation>
    <scope>NUCLEOTIDE SEQUENCE [LARGE SCALE GENOMIC DNA]</scope>
    <source>
        <strain>KIN4/I / DSM 18386 / JCM 14125</strain>
    </source>
</reference>
<protein>
    <recommendedName>
        <fullName evidence="1">Serine--tRNA ligase</fullName>
        <ecNumber evidence="1">6.1.1.11</ecNumber>
    </recommendedName>
    <alternativeName>
        <fullName evidence="1">Seryl-tRNA synthetase</fullName>
        <shortName evidence="1">SerRS</shortName>
    </alternativeName>
    <alternativeName>
        <fullName evidence="1">Seryl-tRNA(Ser/Sec) synthetase</fullName>
    </alternativeName>
</protein>
<gene>
    <name evidence="1" type="primary">serS</name>
    <name type="ordered locus">Igni_0990</name>
</gene>
<feature type="chain" id="PRO_1000019702" description="Serine--tRNA ligase">
    <location>
        <begin position="1"/>
        <end position="458"/>
    </location>
</feature>
<feature type="binding site" evidence="1">
    <location>
        <begin position="255"/>
        <end position="257"/>
    </location>
    <ligand>
        <name>L-serine</name>
        <dbReference type="ChEBI" id="CHEBI:33384"/>
    </ligand>
</feature>
<feature type="binding site" evidence="1">
    <location>
        <begin position="286"/>
        <end position="288"/>
    </location>
    <ligand>
        <name>ATP</name>
        <dbReference type="ChEBI" id="CHEBI:30616"/>
    </ligand>
</feature>
<feature type="binding site" evidence="1">
    <location>
        <position position="302"/>
    </location>
    <ligand>
        <name>ATP</name>
        <dbReference type="ChEBI" id="CHEBI:30616"/>
    </ligand>
</feature>
<feature type="binding site" evidence="1">
    <location>
        <position position="309"/>
    </location>
    <ligand>
        <name>L-serine</name>
        <dbReference type="ChEBI" id="CHEBI:33384"/>
    </ligand>
</feature>
<feature type="binding site" evidence="1">
    <location>
        <begin position="373"/>
        <end position="376"/>
    </location>
    <ligand>
        <name>ATP</name>
        <dbReference type="ChEBI" id="CHEBI:30616"/>
    </ligand>
</feature>
<feature type="binding site" evidence="1">
    <location>
        <position position="409"/>
    </location>
    <ligand>
        <name>L-serine</name>
        <dbReference type="ChEBI" id="CHEBI:33384"/>
    </ligand>
</feature>
<accession>A8AB67</accession>
<proteinExistence type="inferred from homology"/>
<dbReference type="EC" id="6.1.1.11" evidence="1"/>
<dbReference type="EMBL" id="CP000816">
    <property type="protein sequence ID" value="ABU82169.1"/>
    <property type="molecule type" value="Genomic_DNA"/>
</dbReference>
<dbReference type="RefSeq" id="WP_012123133.1">
    <property type="nucleotide sequence ID" value="NC_009776.1"/>
</dbReference>
<dbReference type="SMR" id="A8AB67"/>
<dbReference type="STRING" id="453591.Igni_0990"/>
<dbReference type="GeneID" id="5563082"/>
<dbReference type="KEGG" id="iho:Igni_0990"/>
<dbReference type="eggNOG" id="arCOG00403">
    <property type="taxonomic scope" value="Archaea"/>
</dbReference>
<dbReference type="HOGENOM" id="CLU_023797_0_1_2"/>
<dbReference type="OrthoDB" id="35932at2157"/>
<dbReference type="PhylomeDB" id="A8AB67"/>
<dbReference type="UniPathway" id="UPA00906">
    <property type="reaction ID" value="UER00895"/>
</dbReference>
<dbReference type="Proteomes" id="UP000000262">
    <property type="component" value="Chromosome"/>
</dbReference>
<dbReference type="GO" id="GO:0005737">
    <property type="term" value="C:cytoplasm"/>
    <property type="evidence" value="ECO:0007669"/>
    <property type="project" value="UniProtKB-SubCell"/>
</dbReference>
<dbReference type="GO" id="GO:0005524">
    <property type="term" value="F:ATP binding"/>
    <property type="evidence" value="ECO:0007669"/>
    <property type="project" value="UniProtKB-UniRule"/>
</dbReference>
<dbReference type="GO" id="GO:0004828">
    <property type="term" value="F:serine-tRNA ligase activity"/>
    <property type="evidence" value="ECO:0007669"/>
    <property type="project" value="UniProtKB-UniRule"/>
</dbReference>
<dbReference type="GO" id="GO:0016260">
    <property type="term" value="P:selenocysteine biosynthetic process"/>
    <property type="evidence" value="ECO:0007669"/>
    <property type="project" value="UniProtKB-UniRule"/>
</dbReference>
<dbReference type="GO" id="GO:0006434">
    <property type="term" value="P:seryl-tRNA aminoacylation"/>
    <property type="evidence" value="ECO:0007669"/>
    <property type="project" value="UniProtKB-UniRule"/>
</dbReference>
<dbReference type="CDD" id="cd00770">
    <property type="entry name" value="SerRS_core"/>
    <property type="match status" value="1"/>
</dbReference>
<dbReference type="Gene3D" id="3.30.930.10">
    <property type="entry name" value="Bira Bifunctional Protein, Domain 2"/>
    <property type="match status" value="1"/>
</dbReference>
<dbReference type="Gene3D" id="1.10.287.40">
    <property type="entry name" value="Serine-tRNA synthetase, tRNA binding domain"/>
    <property type="match status" value="1"/>
</dbReference>
<dbReference type="HAMAP" id="MF_00176">
    <property type="entry name" value="Ser_tRNA_synth_type1"/>
    <property type="match status" value="1"/>
</dbReference>
<dbReference type="InterPro" id="IPR002314">
    <property type="entry name" value="aa-tRNA-synt_IIb"/>
</dbReference>
<dbReference type="InterPro" id="IPR006195">
    <property type="entry name" value="aa-tRNA-synth_II"/>
</dbReference>
<dbReference type="InterPro" id="IPR045864">
    <property type="entry name" value="aa-tRNA-synth_II/BPL/LPL"/>
</dbReference>
<dbReference type="InterPro" id="IPR002317">
    <property type="entry name" value="Ser-tRNA-ligase_type_1"/>
</dbReference>
<dbReference type="InterPro" id="IPR015866">
    <property type="entry name" value="Ser-tRNA-synth_1_N"/>
</dbReference>
<dbReference type="InterPro" id="IPR042103">
    <property type="entry name" value="SerRS_1_N_sf"/>
</dbReference>
<dbReference type="InterPro" id="IPR033729">
    <property type="entry name" value="SerRS_core"/>
</dbReference>
<dbReference type="InterPro" id="IPR010978">
    <property type="entry name" value="tRNA-bd_arm"/>
</dbReference>
<dbReference type="NCBIfam" id="TIGR00414">
    <property type="entry name" value="serS"/>
    <property type="match status" value="1"/>
</dbReference>
<dbReference type="PANTHER" id="PTHR11778">
    <property type="entry name" value="SERYL-TRNA SYNTHETASE"/>
    <property type="match status" value="1"/>
</dbReference>
<dbReference type="Pfam" id="PF02403">
    <property type="entry name" value="Seryl_tRNA_N"/>
    <property type="match status" value="1"/>
</dbReference>
<dbReference type="Pfam" id="PF00587">
    <property type="entry name" value="tRNA-synt_2b"/>
    <property type="match status" value="1"/>
</dbReference>
<dbReference type="PIRSF" id="PIRSF001529">
    <property type="entry name" value="Ser-tRNA-synth_IIa"/>
    <property type="match status" value="1"/>
</dbReference>
<dbReference type="PRINTS" id="PR00981">
    <property type="entry name" value="TRNASYNTHSER"/>
</dbReference>
<dbReference type="SUPFAM" id="SSF55681">
    <property type="entry name" value="Class II aaRS and biotin synthetases"/>
    <property type="match status" value="1"/>
</dbReference>
<dbReference type="SUPFAM" id="SSF46589">
    <property type="entry name" value="tRNA-binding arm"/>
    <property type="match status" value="1"/>
</dbReference>
<dbReference type="PROSITE" id="PS50862">
    <property type="entry name" value="AA_TRNA_LIGASE_II"/>
    <property type="match status" value="1"/>
</dbReference>
<comment type="function">
    <text evidence="1">Catalyzes the attachment of serine to tRNA(Ser). Is also able to aminoacylate tRNA(Sec) with serine, to form the misacylated tRNA L-seryl-tRNA(Sec), which will be further converted into selenocysteinyl-tRNA(Sec).</text>
</comment>
<comment type="catalytic activity">
    <reaction evidence="1">
        <text>tRNA(Ser) + L-serine + ATP = L-seryl-tRNA(Ser) + AMP + diphosphate + H(+)</text>
        <dbReference type="Rhea" id="RHEA:12292"/>
        <dbReference type="Rhea" id="RHEA-COMP:9669"/>
        <dbReference type="Rhea" id="RHEA-COMP:9703"/>
        <dbReference type="ChEBI" id="CHEBI:15378"/>
        <dbReference type="ChEBI" id="CHEBI:30616"/>
        <dbReference type="ChEBI" id="CHEBI:33019"/>
        <dbReference type="ChEBI" id="CHEBI:33384"/>
        <dbReference type="ChEBI" id="CHEBI:78442"/>
        <dbReference type="ChEBI" id="CHEBI:78533"/>
        <dbReference type="ChEBI" id="CHEBI:456215"/>
        <dbReference type="EC" id="6.1.1.11"/>
    </reaction>
</comment>
<comment type="catalytic activity">
    <reaction evidence="1">
        <text>tRNA(Sec) + L-serine + ATP = L-seryl-tRNA(Sec) + AMP + diphosphate + H(+)</text>
        <dbReference type="Rhea" id="RHEA:42580"/>
        <dbReference type="Rhea" id="RHEA-COMP:9742"/>
        <dbReference type="Rhea" id="RHEA-COMP:10128"/>
        <dbReference type="ChEBI" id="CHEBI:15378"/>
        <dbReference type="ChEBI" id="CHEBI:30616"/>
        <dbReference type="ChEBI" id="CHEBI:33019"/>
        <dbReference type="ChEBI" id="CHEBI:33384"/>
        <dbReference type="ChEBI" id="CHEBI:78442"/>
        <dbReference type="ChEBI" id="CHEBI:78533"/>
        <dbReference type="ChEBI" id="CHEBI:456215"/>
        <dbReference type="EC" id="6.1.1.11"/>
    </reaction>
</comment>
<comment type="pathway">
    <text evidence="1">Aminoacyl-tRNA biosynthesis; selenocysteinyl-tRNA(Sec) biosynthesis; L-seryl-tRNA(Sec) from L-serine and tRNA(Sec): step 1/1.</text>
</comment>
<comment type="subunit">
    <text evidence="1">Homodimer. The tRNA molecule binds across the dimer.</text>
</comment>
<comment type="subcellular location">
    <subcellularLocation>
        <location evidence="1">Cytoplasm</location>
    </subcellularLocation>
</comment>
<comment type="domain">
    <text evidence="1">Consists of two distinct domains, a catalytic core and a N-terminal extension that is involved in tRNA binding.</text>
</comment>
<comment type="similarity">
    <text evidence="1">Belongs to the class-II aminoacyl-tRNA synthetase family. Type-1 seryl-tRNA synthetase subfamily.</text>
</comment>
<sequence length="458" mass="53350">MPWSVLEALRNNPELLIESMKKRCKDPQPVYEAIRVDEEWRKTLQEVERLRHEHNKITREVAKAKDKAEREALIKKAKELLALKEELEKKLKELEAKREEILLSLPNLVHPSVPEGCDEDHNVPVRFWGKPKVWKGHLEEFEKQTKRWGFEVEHEVVEEKPVGHADMLEKVLRLGNTYKAAQVASSRFYYLFKDLVWLDYALMMYAMDFLSKKGFVLVEPPYMVRYKVLRGVIDVETFKDAIYKIEGEDLYLIATSEHPLAAYKMEEIIDESELPIKLAGVSPCFRKEAGAGNRDLKGIFRVHQFHKVEQFVFSKPEDSWEVLEELIRNAEELVKGLELPYRVVNVCGGELGSPAAKKYDLEVWYPAQGKYRELVSASNCTDWQSYRLKIRYRIKGGKKHDFVHTLNSTALATTRTITAILENHQLPDGRVRIPRALRKYLEPFESAPKDYIEPWTGI</sequence>
<keyword id="KW-0030">Aminoacyl-tRNA synthetase</keyword>
<keyword id="KW-0067">ATP-binding</keyword>
<keyword id="KW-0963">Cytoplasm</keyword>
<keyword id="KW-0436">Ligase</keyword>
<keyword id="KW-0547">Nucleotide-binding</keyword>
<keyword id="KW-0648">Protein biosynthesis</keyword>
<keyword id="KW-1185">Reference proteome</keyword>